<sequence length="63" mass="7341">MAVQQNKKSRSRRDMRRSHDALTKPTLSVDPTTGETHLRHHMTPDGYYRGKKIIDAETAYEQE</sequence>
<feature type="chain" id="PRO_0000225735" description="Large ribosomal subunit protein bL32">
    <location>
        <begin position="1"/>
        <end position="63"/>
    </location>
</feature>
<feature type="region of interest" description="Disordered" evidence="2">
    <location>
        <begin position="1"/>
        <end position="45"/>
    </location>
</feature>
<feature type="compositionally biased region" description="Basic residues" evidence="2">
    <location>
        <begin position="7"/>
        <end position="16"/>
    </location>
</feature>
<feature type="compositionally biased region" description="Polar residues" evidence="2">
    <location>
        <begin position="25"/>
        <end position="35"/>
    </location>
</feature>
<protein>
    <recommendedName>
        <fullName evidence="1">Large ribosomal subunit protein bL32</fullName>
    </recommendedName>
    <alternativeName>
        <fullName evidence="3">50S ribosomal protein L32</fullName>
    </alternativeName>
</protein>
<evidence type="ECO:0000255" key="1">
    <source>
        <dbReference type="HAMAP-Rule" id="MF_00340"/>
    </source>
</evidence>
<evidence type="ECO:0000256" key="2">
    <source>
        <dbReference type="SAM" id="MobiDB-lite"/>
    </source>
</evidence>
<evidence type="ECO:0000305" key="3"/>
<accession>Q5ZVP9</accession>
<organism>
    <name type="scientific">Legionella pneumophila subsp. pneumophila (strain Philadelphia 1 / ATCC 33152 / DSM 7513)</name>
    <dbReference type="NCBI Taxonomy" id="272624"/>
    <lineage>
        <taxon>Bacteria</taxon>
        <taxon>Pseudomonadati</taxon>
        <taxon>Pseudomonadota</taxon>
        <taxon>Gammaproteobacteria</taxon>
        <taxon>Legionellales</taxon>
        <taxon>Legionellaceae</taxon>
        <taxon>Legionella</taxon>
    </lineage>
</organism>
<gene>
    <name evidence="1" type="primary">rpmF</name>
    <name type="ordered locus">lpg1391</name>
</gene>
<reference key="1">
    <citation type="journal article" date="2004" name="Science">
        <title>The genomic sequence of the accidental pathogen Legionella pneumophila.</title>
        <authorList>
            <person name="Chien M."/>
            <person name="Morozova I."/>
            <person name="Shi S."/>
            <person name="Sheng H."/>
            <person name="Chen J."/>
            <person name="Gomez S.M."/>
            <person name="Asamani G."/>
            <person name="Hill K."/>
            <person name="Nuara J."/>
            <person name="Feder M."/>
            <person name="Rineer J."/>
            <person name="Greenberg J.J."/>
            <person name="Steshenko V."/>
            <person name="Park S.H."/>
            <person name="Zhao B."/>
            <person name="Teplitskaya E."/>
            <person name="Edwards J.R."/>
            <person name="Pampou S."/>
            <person name="Georghiou A."/>
            <person name="Chou I.-C."/>
            <person name="Iannuccilli W."/>
            <person name="Ulz M.E."/>
            <person name="Kim D.H."/>
            <person name="Geringer-Sameth A."/>
            <person name="Goldsberry C."/>
            <person name="Morozov P."/>
            <person name="Fischer S.G."/>
            <person name="Segal G."/>
            <person name="Qu X."/>
            <person name="Rzhetsky A."/>
            <person name="Zhang P."/>
            <person name="Cayanis E."/>
            <person name="De Jong P.J."/>
            <person name="Ju J."/>
            <person name="Kalachikov S."/>
            <person name="Shuman H.A."/>
            <person name="Russo J.J."/>
        </authorList>
    </citation>
    <scope>NUCLEOTIDE SEQUENCE [LARGE SCALE GENOMIC DNA]</scope>
    <source>
        <strain>Philadelphia 1 / ATCC 33152 / DSM 7513</strain>
    </source>
</reference>
<keyword id="KW-1185">Reference proteome</keyword>
<keyword id="KW-0687">Ribonucleoprotein</keyword>
<keyword id="KW-0689">Ribosomal protein</keyword>
<proteinExistence type="inferred from homology"/>
<name>RL32_LEGPH</name>
<comment type="similarity">
    <text evidence="1">Belongs to the bacterial ribosomal protein bL32 family.</text>
</comment>
<dbReference type="EMBL" id="AE017354">
    <property type="protein sequence ID" value="AAU27473.1"/>
    <property type="molecule type" value="Genomic_DNA"/>
</dbReference>
<dbReference type="RefSeq" id="WP_010947121.1">
    <property type="nucleotide sequence ID" value="NC_002942.5"/>
</dbReference>
<dbReference type="RefSeq" id="YP_095420.1">
    <property type="nucleotide sequence ID" value="NC_002942.5"/>
</dbReference>
<dbReference type="SMR" id="Q5ZVP9"/>
<dbReference type="STRING" id="272624.lpg1391"/>
<dbReference type="PaxDb" id="272624-lpg1391"/>
<dbReference type="GeneID" id="57035381"/>
<dbReference type="KEGG" id="lpn:lpg1391"/>
<dbReference type="PATRIC" id="fig|272624.6.peg.1461"/>
<dbReference type="eggNOG" id="COG0333">
    <property type="taxonomic scope" value="Bacteria"/>
</dbReference>
<dbReference type="HOGENOM" id="CLU_129084_2_1_6"/>
<dbReference type="OrthoDB" id="9801927at2"/>
<dbReference type="Proteomes" id="UP000000609">
    <property type="component" value="Chromosome"/>
</dbReference>
<dbReference type="GO" id="GO:0015934">
    <property type="term" value="C:large ribosomal subunit"/>
    <property type="evidence" value="ECO:0007669"/>
    <property type="project" value="InterPro"/>
</dbReference>
<dbReference type="GO" id="GO:0003735">
    <property type="term" value="F:structural constituent of ribosome"/>
    <property type="evidence" value="ECO:0007669"/>
    <property type="project" value="InterPro"/>
</dbReference>
<dbReference type="GO" id="GO:0006412">
    <property type="term" value="P:translation"/>
    <property type="evidence" value="ECO:0007669"/>
    <property type="project" value="UniProtKB-UniRule"/>
</dbReference>
<dbReference type="HAMAP" id="MF_00340">
    <property type="entry name" value="Ribosomal_bL32"/>
    <property type="match status" value="1"/>
</dbReference>
<dbReference type="InterPro" id="IPR002677">
    <property type="entry name" value="Ribosomal_bL32"/>
</dbReference>
<dbReference type="InterPro" id="IPR044957">
    <property type="entry name" value="Ribosomal_bL32_bact"/>
</dbReference>
<dbReference type="InterPro" id="IPR011332">
    <property type="entry name" value="Ribosomal_zn-bd"/>
</dbReference>
<dbReference type="NCBIfam" id="TIGR01031">
    <property type="entry name" value="rpmF_bact"/>
    <property type="match status" value="1"/>
</dbReference>
<dbReference type="PANTHER" id="PTHR35534">
    <property type="entry name" value="50S RIBOSOMAL PROTEIN L32"/>
    <property type="match status" value="1"/>
</dbReference>
<dbReference type="PANTHER" id="PTHR35534:SF1">
    <property type="entry name" value="LARGE RIBOSOMAL SUBUNIT PROTEIN BL32"/>
    <property type="match status" value="1"/>
</dbReference>
<dbReference type="Pfam" id="PF01783">
    <property type="entry name" value="Ribosomal_L32p"/>
    <property type="match status" value="1"/>
</dbReference>
<dbReference type="SUPFAM" id="SSF57829">
    <property type="entry name" value="Zn-binding ribosomal proteins"/>
    <property type="match status" value="1"/>
</dbReference>